<organism>
    <name type="scientific">Staphylococcus aureus (strain bovine RF122 / ET3-1)</name>
    <dbReference type="NCBI Taxonomy" id="273036"/>
    <lineage>
        <taxon>Bacteria</taxon>
        <taxon>Bacillati</taxon>
        <taxon>Bacillota</taxon>
        <taxon>Bacilli</taxon>
        <taxon>Bacillales</taxon>
        <taxon>Staphylococcaceae</taxon>
        <taxon>Staphylococcus</taxon>
    </lineage>
</organism>
<keyword id="KW-0687">Ribonucleoprotein</keyword>
<keyword id="KW-0689">Ribosomal protein</keyword>
<reference key="1">
    <citation type="journal article" date="2007" name="PLoS ONE">
        <title>Molecular correlates of host specialization in Staphylococcus aureus.</title>
        <authorList>
            <person name="Herron-Olson L."/>
            <person name="Fitzgerald J.R."/>
            <person name="Musser J.M."/>
            <person name="Kapur V."/>
        </authorList>
    </citation>
    <scope>NUCLEOTIDE SEQUENCE [LARGE SCALE GENOMIC DNA]</scope>
    <source>
        <strain>bovine RF122 / ET3-1</strain>
    </source>
</reference>
<proteinExistence type="inferred from homology"/>
<gene>
    <name evidence="1" type="primary">rpmF</name>
    <name type="ordered locus">SAB0992</name>
</gene>
<protein>
    <recommendedName>
        <fullName evidence="1">Large ribosomal subunit protein bL32</fullName>
    </recommendedName>
    <alternativeName>
        <fullName evidence="2">50S ribosomal protein L32</fullName>
    </alternativeName>
</protein>
<comment type="similarity">
    <text evidence="1">Belongs to the bacterial ribosomal protein bL32 family.</text>
</comment>
<sequence>MAVPKRRTSKTRKNKRRTHFKISVPGMTECPNCGEYKLSHRVCKNCGSYNGEEVAAK</sequence>
<evidence type="ECO:0000255" key="1">
    <source>
        <dbReference type="HAMAP-Rule" id="MF_00340"/>
    </source>
</evidence>
<evidence type="ECO:0000305" key="2"/>
<dbReference type="EMBL" id="AJ938182">
    <property type="protein sequence ID" value="CAI80680.1"/>
    <property type="molecule type" value="Genomic_DNA"/>
</dbReference>
<dbReference type="RefSeq" id="WP_000290472.1">
    <property type="nucleotide sequence ID" value="NC_007622.1"/>
</dbReference>
<dbReference type="SMR" id="Q2YX97"/>
<dbReference type="GeneID" id="98345444"/>
<dbReference type="KEGG" id="sab:SAB0992"/>
<dbReference type="HOGENOM" id="CLU_129084_1_3_9"/>
<dbReference type="GO" id="GO:0015934">
    <property type="term" value="C:large ribosomal subunit"/>
    <property type="evidence" value="ECO:0007669"/>
    <property type="project" value="InterPro"/>
</dbReference>
<dbReference type="GO" id="GO:0003735">
    <property type="term" value="F:structural constituent of ribosome"/>
    <property type="evidence" value="ECO:0007669"/>
    <property type="project" value="InterPro"/>
</dbReference>
<dbReference type="GO" id="GO:0006412">
    <property type="term" value="P:translation"/>
    <property type="evidence" value="ECO:0007669"/>
    <property type="project" value="UniProtKB-UniRule"/>
</dbReference>
<dbReference type="Gene3D" id="1.20.5.640">
    <property type="entry name" value="Single helix bin"/>
    <property type="match status" value="1"/>
</dbReference>
<dbReference type="HAMAP" id="MF_00340">
    <property type="entry name" value="Ribosomal_bL32"/>
    <property type="match status" value="1"/>
</dbReference>
<dbReference type="InterPro" id="IPR002677">
    <property type="entry name" value="Ribosomal_bL32"/>
</dbReference>
<dbReference type="InterPro" id="IPR044957">
    <property type="entry name" value="Ribosomal_bL32_bact"/>
</dbReference>
<dbReference type="InterPro" id="IPR011332">
    <property type="entry name" value="Ribosomal_zn-bd"/>
</dbReference>
<dbReference type="NCBIfam" id="TIGR01031">
    <property type="entry name" value="rpmF_bact"/>
    <property type="match status" value="1"/>
</dbReference>
<dbReference type="PANTHER" id="PTHR35534">
    <property type="entry name" value="50S RIBOSOMAL PROTEIN L32"/>
    <property type="match status" value="1"/>
</dbReference>
<dbReference type="PANTHER" id="PTHR35534:SF2">
    <property type="entry name" value="LARGE RIBOSOMAL SUBUNIT PROTEIN BL32"/>
    <property type="match status" value="1"/>
</dbReference>
<dbReference type="Pfam" id="PF01783">
    <property type="entry name" value="Ribosomal_L32p"/>
    <property type="match status" value="1"/>
</dbReference>
<dbReference type="SUPFAM" id="SSF57829">
    <property type="entry name" value="Zn-binding ribosomal proteins"/>
    <property type="match status" value="1"/>
</dbReference>
<name>RL32_STAAB</name>
<accession>Q2YX97</accession>
<feature type="chain" id="PRO_0000296570" description="Large ribosomal subunit protein bL32">
    <location>
        <begin position="1"/>
        <end position="57"/>
    </location>
</feature>